<accession>D4GTS4</accession>
<reference key="1">
    <citation type="journal article" date="2010" name="PLoS ONE">
        <title>The complete genome sequence of Haloferax volcanii DS2, a model archaeon.</title>
        <authorList>
            <person name="Hartman A.L."/>
            <person name="Norais C."/>
            <person name="Badger J.H."/>
            <person name="Delmas S."/>
            <person name="Haldenby S."/>
            <person name="Madupu R."/>
            <person name="Robinson J."/>
            <person name="Khouri H."/>
            <person name="Ren Q."/>
            <person name="Lowe T.M."/>
            <person name="Maupin-Furlow J."/>
            <person name="Pohlschroder M."/>
            <person name="Daniels C."/>
            <person name="Pfeiffer F."/>
            <person name="Allers T."/>
            <person name="Eisen J.A."/>
        </authorList>
    </citation>
    <scope>NUCLEOTIDE SEQUENCE [LARGE SCALE GENOMIC DNA]</scope>
    <source>
        <strain>ATCC 29605 / DSM 3757 / JCM 8879 / NBRC 14742 / NCIMB 2012 / VKM B-1768 / DS2</strain>
    </source>
</reference>
<reference key="2">
    <citation type="journal article" date="2014" name="PLoS Genet.">
        <title>Phylogenetically driven sequencing of extremely halophilic archaea reveals strategies for static and dynamic osmo-response.</title>
        <authorList>
            <person name="Becker E.A."/>
            <person name="Seitzer P.M."/>
            <person name="Tritt A."/>
            <person name="Larsen D."/>
            <person name="Krusor M."/>
            <person name="Yao A.I."/>
            <person name="Wu D."/>
            <person name="Madern D."/>
            <person name="Eisen J.A."/>
            <person name="Darling A.E."/>
            <person name="Facciotti M.T."/>
        </authorList>
    </citation>
    <scope>NUCLEOTIDE SEQUENCE [LARGE SCALE GENOMIC DNA]</scope>
    <source>
        <strain>ATCC 29605 / DSM 3757 / JCM 8879 / NBRC 14742 / NCIMB 2012 / VKM B-1768 / DS2</strain>
    </source>
</reference>
<reference key="3">
    <citation type="journal article" date="2012" name="Mol. Microbiol.">
        <title>Archaeal JAB1/MPN/MOV34 metalloenzyme (HvJAMM1) cleaves ubiquitin-like small archaeal modifier proteins (SAMPs) from protein-conjugates.</title>
        <authorList>
            <person name="Hepowit N.L."/>
            <person name="Uthandi S."/>
            <person name="Miranda H.V."/>
            <person name="Toniutti M."/>
            <person name="Prunetti L."/>
            <person name="Olivarez O."/>
            <person name="De Vera I.M."/>
            <person name="Fanucci G.E."/>
            <person name="Chen S."/>
            <person name="Maupin-Furlow J.A."/>
        </authorList>
    </citation>
    <scope>FUNCTION</scope>
    <scope>CATALYTIC ACTIVITY</scope>
    <scope>COFACTOR</scope>
    <scope>SUBSTRATE SPECIFICITY</scope>
    <scope>ACTIVITY REGULATION</scope>
    <scope>BIOPHYSICOCHEMICAL PROPERTIES</scope>
    <scope>SUBUNIT</scope>
    <scope>ACTIVE SITE</scope>
    <scope>REACTION MECHANISM</scope>
    <scope>MUTAGENESIS OF GLU-31; HIS-88; HIS-90; ASP-94; SER-98; ASP-101 AND CYS-115</scope>
    <source>
        <strain>DS2 / DS70</strain>
    </source>
</reference>
<reference key="4">
    <citation type="journal article" date="2014" name="Mol. Cell. Proteomics">
        <title>Archaeal ubiquitin-like SAMP3 is isopeptide-linked to proteins via a UbaA-dependent mechanism.</title>
        <authorList>
            <person name="Miranda H.V."/>
            <person name="Antelmann H."/>
            <person name="Hepowit N."/>
            <person name="Chavarria N.E."/>
            <person name="Krause D.J."/>
            <person name="Pritz J.R."/>
            <person name="Basell K."/>
            <person name="Becher D."/>
            <person name="Humbard M.A."/>
            <person name="Brocchieri L."/>
            <person name="Maupin-Furlow J.A."/>
        </authorList>
    </citation>
    <scope>FUNCTION</scope>
    <source>
        <strain>DS2 / DS70</strain>
    </source>
</reference>
<proteinExistence type="evidence at protein level"/>
<keyword id="KW-0378">Hydrolase</keyword>
<keyword id="KW-0479">Metal-binding</keyword>
<keyword id="KW-0482">Metalloprotease</keyword>
<keyword id="KW-0645">Protease</keyword>
<keyword id="KW-1185">Reference proteome</keyword>
<keyword id="KW-0862">Zinc</keyword>
<evidence type="ECO:0000255" key="1">
    <source>
        <dbReference type="PROSITE-ProRule" id="PRU01182"/>
    </source>
</evidence>
<evidence type="ECO:0000269" key="2">
    <source>
    </source>
</evidence>
<evidence type="ECO:0000269" key="3">
    <source>
    </source>
</evidence>
<evidence type="ECO:0000305" key="4"/>
<evidence type="ECO:0000305" key="5">
    <source>
    </source>
</evidence>
<protein>
    <recommendedName>
        <fullName>Desampylase</fullName>
        <ecNumber evidence="2">3.4.19.15</ecNumber>
    </recommendedName>
    <alternativeName>
        <fullName>HvJAMM1</fullName>
    </alternativeName>
</protein>
<gene>
    <name type="ordered locus">HVO_2505</name>
    <name type="ORF">C498_07813</name>
</gene>
<name>JAMM1_HALVD</name>
<sequence>MTSSRLSLAADARDSILSHAREGAAGDPPAEVCGVLAGDSDARTVTAAHPVSNVAAEPRVAYELDPEETVSILEAIESAGDDAVGFYHSHPESDPVPSATDRERASWPGYVYLICSPDGRMTAHEWTGDEFRELSVAVE</sequence>
<comment type="function">
    <text evidence="2 3">Metalloprotease that displays desampylase (DSAMP) activity, cleaving ubiquitin-like small archaeal modifier proteins (SAMP1, SAMP2 and SAMP3) from protein conjugates (isopeptide- and linear-linked). Thus, likely regulates sampylation and the pools of 'free' SAMP available for protein modification. Functions as a specific and not a general protease since it is unable to hydrolyze a variety of unmodified proteins otherwise hydrolyzed by proteinase K.</text>
</comment>
<comment type="catalytic activity">
    <reaction evidence="2">
        <text>an N(6)-[small archaeal modifier protein]-[protein]-L-lysine + H2O = a [protein]-L-lysine + a [small archaeal modifier protein].</text>
        <dbReference type="EC" id="3.4.19.15"/>
    </reaction>
</comment>
<comment type="cofactor">
    <cofactor evidence="2">
        <name>Zn(2+)</name>
        <dbReference type="ChEBI" id="CHEBI:29105"/>
    </cofactor>
    <text evidence="2">Binds 1 zinc ion per subunit.</text>
</comment>
<comment type="activity regulation">
    <text evidence="2">Inhibited by EDTA and N-ethylmaleimide (NEM) in vitro.</text>
</comment>
<comment type="biophysicochemical properties">
    <phDependence>
        <text evidence="2">Optimum pH is 7-10. Displays little to no activity at low pH (pH 6.5 and below).</text>
    </phDependence>
    <temperatureDependence>
        <text evidence="2">Optimum temperature is 40-50 degrees Celsius. Is active over a wide range of temperature (20-60 degrees Celsius). However, the enzyme is not active at 70 degrees Celsius.</text>
    </temperatureDependence>
</comment>
<comment type="subunit">
    <text evidence="2">Monomer.</text>
</comment>
<comment type="miscellaneous">
    <text>Is optimally active at NaCl concentrations of 0.7-2 M, and displays little to no activity at low concentrations of salt (150 mM NaCl).</text>
</comment>
<comment type="similarity">
    <text evidence="4">Belongs to the peptidase M67B family.</text>
</comment>
<dbReference type="EC" id="3.4.19.15" evidence="2"/>
<dbReference type="EMBL" id="CP001956">
    <property type="protein sequence ID" value="ADE04294.1"/>
    <property type="molecule type" value="Genomic_DNA"/>
</dbReference>
<dbReference type="EMBL" id="AOHU01000045">
    <property type="protein sequence ID" value="ELY32652.1"/>
    <property type="molecule type" value="Genomic_DNA"/>
</dbReference>
<dbReference type="RefSeq" id="WP_004042475.1">
    <property type="nucleotide sequence ID" value="NC_013967.1"/>
</dbReference>
<dbReference type="SMR" id="D4GTS4"/>
<dbReference type="STRING" id="309800.HVO_2505"/>
<dbReference type="MEROPS" id="M67.012"/>
<dbReference type="PaxDb" id="309800-C498_07813"/>
<dbReference type="EnsemblBacteria" id="ADE04294">
    <property type="protein sequence ID" value="ADE04294"/>
    <property type="gene ID" value="HVO_2505"/>
</dbReference>
<dbReference type="GeneID" id="8924939"/>
<dbReference type="KEGG" id="hvo:HVO_2505"/>
<dbReference type="PATRIC" id="fig|309800.29.peg.1519"/>
<dbReference type="eggNOG" id="arCOG01138">
    <property type="taxonomic scope" value="Archaea"/>
</dbReference>
<dbReference type="HOGENOM" id="CLU_116765_4_2_2"/>
<dbReference type="OrthoDB" id="10589at2157"/>
<dbReference type="BioCyc" id="MetaCyc:MONOMER-20240"/>
<dbReference type="BRENDA" id="3.4.19.15">
    <property type="organism ID" value="2561"/>
</dbReference>
<dbReference type="Proteomes" id="UP000008243">
    <property type="component" value="Chromosome"/>
</dbReference>
<dbReference type="Proteomes" id="UP000011532">
    <property type="component" value="Unassembled WGS sequence"/>
</dbReference>
<dbReference type="GO" id="GO:0008235">
    <property type="term" value="F:metalloexopeptidase activity"/>
    <property type="evidence" value="ECO:0007669"/>
    <property type="project" value="TreeGrafter"/>
</dbReference>
<dbReference type="GO" id="GO:0008270">
    <property type="term" value="F:zinc ion binding"/>
    <property type="evidence" value="ECO:0007669"/>
    <property type="project" value="TreeGrafter"/>
</dbReference>
<dbReference type="GO" id="GO:0006508">
    <property type="term" value="P:proteolysis"/>
    <property type="evidence" value="ECO:0007669"/>
    <property type="project" value="UniProtKB-KW"/>
</dbReference>
<dbReference type="CDD" id="cd08070">
    <property type="entry name" value="MPN_like"/>
    <property type="match status" value="1"/>
</dbReference>
<dbReference type="Gene3D" id="3.40.140.10">
    <property type="entry name" value="Cytidine Deaminase, domain 2"/>
    <property type="match status" value="1"/>
</dbReference>
<dbReference type="InterPro" id="IPR028090">
    <property type="entry name" value="JAB_dom_prok"/>
</dbReference>
<dbReference type="InterPro" id="IPR000555">
    <property type="entry name" value="JAMM/MPN+_dom"/>
</dbReference>
<dbReference type="InterPro" id="IPR053551">
    <property type="entry name" value="Metalloprotease_DSAMP"/>
</dbReference>
<dbReference type="InterPro" id="IPR037518">
    <property type="entry name" value="MPN"/>
</dbReference>
<dbReference type="InterPro" id="IPR051929">
    <property type="entry name" value="VirAsm_ModProt"/>
</dbReference>
<dbReference type="NCBIfam" id="NF041370">
    <property type="entry name" value="desamp_Halo"/>
    <property type="match status" value="1"/>
</dbReference>
<dbReference type="PANTHER" id="PTHR34858">
    <property type="entry name" value="CYSO-CYSTEINE PEPTIDASE"/>
    <property type="match status" value="1"/>
</dbReference>
<dbReference type="PANTHER" id="PTHR34858:SF1">
    <property type="entry name" value="CYSO-CYSTEINE PEPTIDASE"/>
    <property type="match status" value="1"/>
</dbReference>
<dbReference type="Pfam" id="PF14464">
    <property type="entry name" value="Prok-JAB"/>
    <property type="match status" value="1"/>
</dbReference>
<dbReference type="SMART" id="SM00232">
    <property type="entry name" value="JAB_MPN"/>
    <property type="match status" value="1"/>
</dbReference>
<dbReference type="SUPFAM" id="SSF102712">
    <property type="entry name" value="JAB1/MPN domain"/>
    <property type="match status" value="1"/>
</dbReference>
<dbReference type="PROSITE" id="PS50249">
    <property type="entry name" value="MPN"/>
    <property type="match status" value="1"/>
</dbReference>
<organism>
    <name type="scientific">Haloferax volcanii (strain ATCC 29605 / DSM 3757 / JCM 8879 / NBRC 14742 / NCIMB 2012 / VKM B-1768 / DS2)</name>
    <name type="common">Halobacterium volcanii</name>
    <dbReference type="NCBI Taxonomy" id="309800"/>
    <lineage>
        <taxon>Archaea</taxon>
        <taxon>Methanobacteriati</taxon>
        <taxon>Methanobacteriota</taxon>
        <taxon>Stenosarchaea group</taxon>
        <taxon>Halobacteria</taxon>
        <taxon>Halobacteriales</taxon>
        <taxon>Haloferacaceae</taxon>
        <taxon>Haloferax</taxon>
    </lineage>
</organism>
<feature type="chain" id="PRO_0000428938" description="Desampylase">
    <location>
        <begin position="1"/>
        <end position="139"/>
    </location>
</feature>
<feature type="domain" description="MPN" evidence="1">
    <location>
        <begin position="6"/>
        <end position="139"/>
    </location>
</feature>
<feature type="short sequence motif" description="JAMM motif" evidence="1">
    <location>
        <begin position="88"/>
        <end position="101"/>
    </location>
</feature>
<feature type="active site" description="Proton donor/acceptor" evidence="5">
    <location>
        <position position="31"/>
    </location>
</feature>
<feature type="binding site" evidence="1">
    <location>
        <position position="88"/>
    </location>
    <ligand>
        <name>Zn(2+)</name>
        <dbReference type="ChEBI" id="CHEBI:29105"/>
        <note>catalytic</note>
    </ligand>
</feature>
<feature type="binding site" evidence="1">
    <location>
        <position position="90"/>
    </location>
    <ligand>
        <name>Zn(2+)</name>
        <dbReference type="ChEBI" id="CHEBI:29105"/>
        <note>catalytic</note>
    </ligand>
</feature>
<feature type="binding site" evidence="1">
    <location>
        <position position="101"/>
    </location>
    <ligand>
        <name>Zn(2+)</name>
        <dbReference type="ChEBI" id="CHEBI:29105"/>
        <note>catalytic</note>
    </ligand>
</feature>
<feature type="site" description="Transition state stabilizer" evidence="4">
    <location>
        <position position="98"/>
    </location>
</feature>
<feature type="mutagenesis site" description="Loss of catalytic activity." evidence="2">
    <original>E</original>
    <variation>D</variation>
    <location>
        <position position="31"/>
    </location>
</feature>
<feature type="mutagenesis site" description="Loss of catalytic activity." evidence="2">
    <original>H</original>
    <variation>N</variation>
    <location>
        <position position="88"/>
    </location>
</feature>
<feature type="mutagenesis site" description="Loss of catalytic activity." evidence="2">
    <original>H</original>
    <variation>Q</variation>
    <location>
        <position position="90"/>
    </location>
</feature>
<feature type="mutagenesis site" description="Retains desampylating activity." evidence="2">
    <original>D</original>
    <variation>N</variation>
    <location>
        <position position="94"/>
    </location>
</feature>
<feature type="mutagenesis site" description="Loss of catalytic activity." evidence="2">
    <original>S</original>
    <variation>A</variation>
    <location>
        <position position="98"/>
    </location>
</feature>
<feature type="mutagenesis site" description="Loss of catalytic activity." evidence="2">
    <original>D</original>
    <variation>E</variation>
    <location>
        <position position="101"/>
    </location>
</feature>
<feature type="mutagenesis site" description="Retains desampylating activity." evidence="2">
    <original>C</original>
    <variation>S</variation>
    <location>
        <position position="115"/>
    </location>
</feature>